<name>PROB_HELHP</name>
<keyword id="KW-0028">Amino-acid biosynthesis</keyword>
<keyword id="KW-0067">ATP-binding</keyword>
<keyword id="KW-0963">Cytoplasm</keyword>
<keyword id="KW-0418">Kinase</keyword>
<keyword id="KW-0547">Nucleotide-binding</keyword>
<keyword id="KW-0641">Proline biosynthesis</keyword>
<keyword id="KW-1185">Reference proteome</keyword>
<keyword id="KW-0808">Transferase</keyword>
<sequence>MQKPRIVLKIGSSNLCNGKIIDKTQIKALAQIISELKMRFDVILVSSGAVASGHTTLHIDRNTLQNKQALASIGQPLLMESYREALKDYAIPTAQLLLVWRDFDSRKNTTFAKDTIDTLLAHNALPIINENDTIATDEMVFGDNDRLGAYVTYYFGAKLLIILSDIDGYFDKNPHQYDDAQILPIVHSIPSQALEQTHSPHGDFATGGIVTKLIAADFLLQRKCMMFLSHGRKLDVLRDFLLHNKQSSGTLFCPADSQGIKTLI</sequence>
<organism>
    <name type="scientific">Helicobacter hepaticus (strain ATCC 51449 / 3B1)</name>
    <dbReference type="NCBI Taxonomy" id="235279"/>
    <lineage>
        <taxon>Bacteria</taxon>
        <taxon>Pseudomonadati</taxon>
        <taxon>Campylobacterota</taxon>
        <taxon>Epsilonproteobacteria</taxon>
        <taxon>Campylobacterales</taxon>
        <taxon>Helicobacteraceae</taxon>
        <taxon>Helicobacter</taxon>
    </lineage>
</organism>
<proteinExistence type="inferred from homology"/>
<evidence type="ECO:0000255" key="1">
    <source>
        <dbReference type="HAMAP-Rule" id="MF_00456"/>
    </source>
</evidence>
<dbReference type="EC" id="2.7.2.11" evidence="1"/>
<dbReference type="EMBL" id="AE017125">
    <property type="protein sequence ID" value="AAP77016.1"/>
    <property type="molecule type" value="Genomic_DNA"/>
</dbReference>
<dbReference type="RefSeq" id="WP_011115261.1">
    <property type="nucleotide sequence ID" value="NC_004917.1"/>
</dbReference>
<dbReference type="SMR" id="Q7VJ31"/>
<dbReference type="STRING" id="235279.HH_0419"/>
<dbReference type="KEGG" id="hhe:HH_0419"/>
<dbReference type="eggNOG" id="COG0263">
    <property type="taxonomic scope" value="Bacteria"/>
</dbReference>
<dbReference type="HOGENOM" id="CLU_025400_0_0_7"/>
<dbReference type="OrthoDB" id="9804434at2"/>
<dbReference type="UniPathway" id="UPA00098">
    <property type="reaction ID" value="UER00359"/>
</dbReference>
<dbReference type="Proteomes" id="UP000002495">
    <property type="component" value="Chromosome"/>
</dbReference>
<dbReference type="GO" id="GO:0005829">
    <property type="term" value="C:cytosol"/>
    <property type="evidence" value="ECO:0007669"/>
    <property type="project" value="TreeGrafter"/>
</dbReference>
<dbReference type="GO" id="GO:0005524">
    <property type="term" value="F:ATP binding"/>
    <property type="evidence" value="ECO:0007669"/>
    <property type="project" value="UniProtKB-KW"/>
</dbReference>
<dbReference type="GO" id="GO:0004349">
    <property type="term" value="F:glutamate 5-kinase activity"/>
    <property type="evidence" value="ECO:0007669"/>
    <property type="project" value="UniProtKB-UniRule"/>
</dbReference>
<dbReference type="GO" id="GO:0055129">
    <property type="term" value="P:L-proline biosynthetic process"/>
    <property type="evidence" value="ECO:0007669"/>
    <property type="project" value="UniProtKB-UniRule"/>
</dbReference>
<dbReference type="CDD" id="cd04242">
    <property type="entry name" value="AAK_G5K_ProB"/>
    <property type="match status" value="1"/>
</dbReference>
<dbReference type="FunFam" id="3.40.1160.10:FF:000006">
    <property type="entry name" value="Glutamate 5-kinase"/>
    <property type="match status" value="1"/>
</dbReference>
<dbReference type="Gene3D" id="3.40.1160.10">
    <property type="entry name" value="Acetylglutamate kinase-like"/>
    <property type="match status" value="1"/>
</dbReference>
<dbReference type="HAMAP" id="MF_00456">
    <property type="entry name" value="ProB"/>
    <property type="match status" value="1"/>
</dbReference>
<dbReference type="InterPro" id="IPR036393">
    <property type="entry name" value="AceGlu_kinase-like_sf"/>
</dbReference>
<dbReference type="InterPro" id="IPR001048">
    <property type="entry name" value="Asp/Glu/Uridylate_kinase"/>
</dbReference>
<dbReference type="InterPro" id="IPR041739">
    <property type="entry name" value="G5K_ProB"/>
</dbReference>
<dbReference type="InterPro" id="IPR001057">
    <property type="entry name" value="Glu/AcGlu_kinase"/>
</dbReference>
<dbReference type="InterPro" id="IPR011529">
    <property type="entry name" value="Glu_5kinase"/>
</dbReference>
<dbReference type="InterPro" id="IPR005715">
    <property type="entry name" value="Glu_5kinase/COase_Synthase"/>
</dbReference>
<dbReference type="InterPro" id="IPR019797">
    <property type="entry name" value="Glutamate_5-kinase_CS"/>
</dbReference>
<dbReference type="NCBIfam" id="TIGR01027">
    <property type="entry name" value="proB"/>
    <property type="match status" value="1"/>
</dbReference>
<dbReference type="PANTHER" id="PTHR43654">
    <property type="entry name" value="GLUTAMATE 5-KINASE"/>
    <property type="match status" value="1"/>
</dbReference>
<dbReference type="PANTHER" id="PTHR43654:SF3">
    <property type="entry name" value="GLUTAMATE 5-KINASE"/>
    <property type="match status" value="1"/>
</dbReference>
<dbReference type="Pfam" id="PF00696">
    <property type="entry name" value="AA_kinase"/>
    <property type="match status" value="1"/>
</dbReference>
<dbReference type="PIRSF" id="PIRSF000729">
    <property type="entry name" value="GK"/>
    <property type="match status" value="1"/>
</dbReference>
<dbReference type="PRINTS" id="PR00474">
    <property type="entry name" value="GLU5KINASE"/>
</dbReference>
<dbReference type="SUPFAM" id="SSF53633">
    <property type="entry name" value="Carbamate kinase-like"/>
    <property type="match status" value="1"/>
</dbReference>
<dbReference type="PROSITE" id="PS00902">
    <property type="entry name" value="GLUTAMATE_5_KINASE"/>
    <property type="match status" value="1"/>
</dbReference>
<comment type="function">
    <text evidence="1">Catalyzes the transfer of a phosphate group to glutamate to form L-glutamate 5-phosphate.</text>
</comment>
<comment type="catalytic activity">
    <reaction evidence="1">
        <text>L-glutamate + ATP = L-glutamyl 5-phosphate + ADP</text>
        <dbReference type="Rhea" id="RHEA:14877"/>
        <dbReference type="ChEBI" id="CHEBI:29985"/>
        <dbReference type="ChEBI" id="CHEBI:30616"/>
        <dbReference type="ChEBI" id="CHEBI:58274"/>
        <dbReference type="ChEBI" id="CHEBI:456216"/>
        <dbReference type="EC" id="2.7.2.11"/>
    </reaction>
</comment>
<comment type="pathway">
    <text evidence="1">Amino-acid biosynthesis; L-proline biosynthesis; L-glutamate 5-semialdehyde from L-glutamate: step 1/2.</text>
</comment>
<comment type="subcellular location">
    <subcellularLocation>
        <location evidence="1">Cytoplasm</location>
    </subcellularLocation>
</comment>
<comment type="similarity">
    <text evidence="1">Belongs to the glutamate 5-kinase family.</text>
</comment>
<feature type="chain" id="PRO_0000109680" description="Glutamate 5-kinase">
    <location>
        <begin position="1"/>
        <end position="264"/>
    </location>
</feature>
<feature type="binding site" evidence="1">
    <location>
        <position position="9"/>
    </location>
    <ligand>
        <name>ATP</name>
        <dbReference type="ChEBI" id="CHEBI:30616"/>
    </ligand>
</feature>
<feature type="binding site" evidence="1">
    <location>
        <position position="47"/>
    </location>
    <ligand>
        <name>substrate</name>
    </ligand>
</feature>
<feature type="binding site" evidence="1">
    <location>
        <position position="132"/>
    </location>
    <ligand>
        <name>substrate</name>
    </ligand>
</feature>
<feature type="binding site" evidence="1">
    <location>
        <position position="144"/>
    </location>
    <ligand>
        <name>substrate</name>
    </ligand>
</feature>
<feature type="binding site" evidence="1">
    <location>
        <begin position="164"/>
        <end position="165"/>
    </location>
    <ligand>
        <name>ATP</name>
        <dbReference type="ChEBI" id="CHEBI:30616"/>
    </ligand>
</feature>
<feature type="binding site" evidence="1">
    <location>
        <begin position="206"/>
        <end position="212"/>
    </location>
    <ligand>
        <name>ATP</name>
        <dbReference type="ChEBI" id="CHEBI:30616"/>
    </ligand>
</feature>
<protein>
    <recommendedName>
        <fullName evidence="1">Glutamate 5-kinase</fullName>
        <ecNumber evidence="1">2.7.2.11</ecNumber>
    </recommendedName>
    <alternativeName>
        <fullName evidence="1">Gamma-glutamyl kinase</fullName>
        <shortName evidence="1">GK</shortName>
    </alternativeName>
</protein>
<gene>
    <name evidence="1" type="primary">proB</name>
    <name type="ordered locus">HH_0419</name>
</gene>
<reference key="1">
    <citation type="journal article" date="2003" name="Proc. Natl. Acad. Sci. U.S.A.">
        <title>The complete genome sequence of the carcinogenic bacterium Helicobacter hepaticus.</title>
        <authorList>
            <person name="Suerbaum S."/>
            <person name="Josenhans C."/>
            <person name="Sterzenbach T."/>
            <person name="Drescher B."/>
            <person name="Brandt P."/>
            <person name="Bell M."/>
            <person name="Droege M."/>
            <person name="Fartmann B."/>
            <person name="Fischer H.-P."/>
            <person name="Ge Z."/>
            <person name="Hoerster A."/>
            <person name="Holland R."/>
            <person name="Klein K."/>
            <person name="Koenig J."/>
            <person name="Macko L."/>
            <person name="Mendz G.L."/>
            <person name="Nyakatura G."/>
            <person name="Schauer D.B."/>
            <person name="Shen Z."/>
            <person name="Weber J."/>
            <person name="Frosch M."/>
            <person name="Fox J.G."/>
        </authorList>
    </citation>
    <scope>NUCLEOTIDE SEQUENCE [LARGE SCALE GENOMIC DNA]</scope>
    <source>
        <strain>ATCC 51449 / 3B1</strain>
    </source>
</reference>
<accession>Q7VJ31</accession>